<accession>Q9HWC6</accession>
<proteinExistence type="inferred from homology"/>
<evidence type="ECO:0000255" key="1">
    <source>
        <dbReference type="HAMAP-Rule" id="MF_01318"/>
    </source>
</evidence>
<evidence type="ECO:0000305" key="2"/>
<comment type="function">
    <text evidence="1">Binds directly to 23S rRNA. The L1 stalk is quite mobile in the ribosome, and is involved in E site tRNA release.</text>
</comment>
<comment type="function">
    <text evidence="1">Protein L1 is also a translational repressor protein, it controls the translation of the L11 operon by binding to its mRNA.</text>
</comment>
<comment type="subunit">
    <text evidence="1">Part of the 50S ribosomal subunit.</text>
</comment>
<comment type="similarity">
    <text evidence="1">Belongs to the universal ribosomal protein uL1 family.</text>
</comment>
<keyword id="KW-1185">Reference proteome</keyword>
<keyword id="KW-0678">Repressor</keyword>
<keyword id="KW-0687">Ribonucleoprotein</keyword>
<keyword id="KW-0689">Ribosomal protein</keyword>
<keyword id="KW-0694">RNA-binding</keyword>
<keyword id="KW-0699">rRNA-binding</keyword>
<keyword id="KW-0810">Translation regulation</keyword>
<keyword id="KW-0820">tRNA-binding</keyword>
<feature type="chain" id="PRO_0000125714" description="Large ribosomal subunit protein uL1">
    <location>
        <begin position="1"/>
        <end position="231"/>
    </location>
</feature>
<name>RL1_PSEAE</name>
<sequence>MAKLTKRQKAIAEKVVAGKQYSFEEAAKLLAELSTIKFKESVDVAVNLGVDPRKSDQVVRGATVLPNGTGKSVRVAVFTQGPAAEAALAAGADKVGMDELAAEMKGGDLNYDVVIASPDAMRVVGQLGQILGPRGLMPNPKVGTVTPDVATAVKNAKAGQVRFRTDKNGIIHSSVGKVDFEPAKLQQNVEALLADLKRLKPSSSKGVYVKRVTLSTTMGPGLQIDLASLEA</sequence>
<reference key="1">
    <citation type="journal article" date="2000" name="Nature">
        <title>Complete genome sequence of Pseudomonas aeruginosa PAO1, an opportunistic pathogen.</title>
        <authorList>
            <person name="Stover C.K."/>
            <person name="Pham X.-Q.T."/>
            <person name="Erwin A.L."/>
            <person name="Mizoguchi S.D."/>
            <person name="Warrener P."/>
            <person name="Hickey M.J."/>
            <person name="Brinkman F.S.L."/>
            <person name="Hufnagle W.O."/>
            <person name="Kowalik D.J."/>
            <person name="Lagrou M."/>
            <person name="Garber R.L."/>
            <person name="Goltry L."/>
            <person name="Tolentino E."/>
            <person name="Westbrock-Wadman S."/>
            <person name="Yuan Y."/>
            <person name="Brody L.L."/>
            <person name="Coulter S.N."/>
            <person name="Folger K.R."/>
            <person name="Kas A."/>
            <person name="Larbig K."/>
            <person name="Lim R.M."/>
            <person name="Smith K.A."/>
            <person name="Spencer D.H."/>
            <person name="Wong G.K.-S."/>
            <person name="Wu Z."/>
            <person name="Paulsen I.T."/>
            <person name="Reizer J."/>
            <person name="Saier M.H. Jr."/>
            <person name="Hancock R.E.W."/>
            <person name="Lory S."/>
            <person name="Olson M.V."/>
        </authorList>
    </citation>
    <scope>NUCLEOTIDE SEQUENCE [LARGE SCALE GENOMIC DNA]</scope>
    <source>
        <strain>ATCC 15692 / DSM 22644 / CIP 104116 / JCM 14847 / LMG 12228 / 1C / PRS 101 / PAO1</strain>
    </source>
</reference>
<dbReference type="EMBL" id="AE004091">
    <property type="protein sequence ID" value="AAG07661.1"/>
    <property type="molecule type" value="Genomic_DNA"/>
</dbReference>
<dbReference type="PIR" id="B83111">
    <property type="entry name" value="B83111"/>
</dbReference>
<dbReference type="RefSeq" id="NP_252963.1">
    <property type="nucleotide sequence ID" value="NC_002516.2"/>
</dbReference>
<dbReference type="RefSeq" id="WP_003093749.1">
    <property type="nucleotide sequence ID" value="NZ_QZGE01000028.1"/>
</dbReference>
<dbReference type="SMR" id="Q9HWC6"/>
<dbReference type="FunCoup" id="Q9HWC6">
    <property type="interactions" value="943"/>
</dbReference>
<dbReference type="STRING" id="208964.PA4273"/>
<dbReference type="PaxDb" id="208964-PA4273"/>
<dbReference type="DNASU" id="881704"/>
<dbReference type="GeneID" id="77219188"/>
<dbReference type="GeneID" id="881704"/>
<dbReference type="KEGG" id="pae:PA4273"/>
<dbReference type="PATRIC" id="fig|208964.12.peg.4474"/>
<dbReference type="PseudoCAP" id="PA4273"/>
<dbReference type="HOGENOM" id="CLU_062853_0_0_6"/>
<dbReference type="InParanoid" id="Q9HWC6"/>
<dbReference type="OrthoDB" id="9803740at2"/>
<dbReference type="PhylomeDB" id="Q9HWC6"/>
<dbReference type="BioCyc" id="PAER208964:G1FZ6-4348-MONOMER"/>
<dbReference type="PRO" id="PR:Q9HWC6"/>
<dbReference type="Proteomes" id="UP000002438">
    <property type="component" value="Chromosome"/>
</dbReference>
<dbReference type="GO" id="GO:0022625">
    <property type="term" value="C:cytosolic large ribosomal subunit"/>
    <property type="evidence" value="ECO:0000318"/>
    <property type="project" value="GO_Central"/>
</dbReference>
<dbReference type="GO" id="GO:0019843">
    <property type="term" value="F:rRNA binding"/>
    <property type="evidence" value="ECO:0007669"/>
    <property type="project" value="UniProtKB-UniRule"/>
</dbReference>
<dbReference type="GO" id="GO:0003735">
    <property type="term" value="F:structural constituent of ribosome"/>
    <property type="evidence" value="ECO:0007669"/>
    <property type="project" value="InterPro"/>
</dbReference>
<dbReference type="GO" id="GO:0000049">
    <property type="term" value="F:tRNA binding"/>
    <property type="evidence" value="ECO:0007669"/>
    <property type="project" value="UniProtKB-KW"/>
</dbReference>
<dbReference type="GO" id="GO:0006417">
    <property type="term" value="P:regulation of translation"/>
    <property type="evidence" value="ECO:0007669"/>
    <property type="project" value="UniProtKB-KW"/>
</dbReference>
<dbReference type="GO" id="GO:0006412">
    <property type="term" value="P:translation"/>
    <property type="evidence" value="ECO:0007669"/>
    <property type="project" value="UniProtKB-UniRule"/>
</dbReference>
<dbReference type="CDD" id="cd00403">
    <property type="entry name" value="Ribosomal_L1"/>
    <property type="match status" value="1"/>
</dbReference>
<dbReference type="FunFam" id="3.40.50.790:FF:000001">
    <property type="entry name" value="50S ribosomal protein L1"/>
    <property type="match status" value="1"/>
</dbReference>
<dbReference type="Gene3D" id="3.30.190.20">
    <property type="match status" value="1"/>
</dbReference>
<dbReference type="Gene3D" id="3.40.50.790">
    <property type="match status" value="1"/>
</dbReference>
<dbReference type="HAMAP" id="MF_01318_B">
    <property type="entry name" value="Ribosomal_uL1_B"/>
    <property type="match status" value="1"/>
</dbReference>
<dbReference type="InterPro" id="IPR005878">
    <property type="entry name" value="Ribosom_uL1_bac-type"/>
</dbReference>
<dbReference type="InterPro" id="IPR002143">
    <property type="entry name" value="Ribosomal_uL1"/>
</dbReference>
<dbReference type="InterPro" id="IPR023674">
    <property type="entry name" value="Ribosomal_uL1-like"/>
</dbReference>
<dbReference type="InterPro" id="IPR028364">
    <property type="entry name" value="Ribosomal_uL1/biogenesis"/>
</dbReference>
<dbReference type="InterPro" id="IPR016095">
    <property type="entry name" value="Ribosomal_uL1_3-a/b-sand"/>
</dbReference>
<dbReference type="InterPro" id="IPR023673">
    <property type="entry name" value="Ribosomal_uL1_CS"/>
</dbReference>
<dbReference type="NCBIfam" id="TIGR01169">
    <property type="entry name" value="rplA_bact"/>
    <property type="match status" value="1"/>
</dbReference>
<dbReference type="PANTHER" id="PTHR36427">
    <property type="entry name" value="54S RIBOSOMAL PROTEIN L1, MITOCHONDRIAL"/>
    <property type="match status" value="1"/>
</dbReference>
<dbReference type="PANTHER" id="PTHR36427:SF3">
    <property type="entry name" value="LARGE RIBOSOMAL SUBUNIT PROTEIN UL1M"/>
    <property type="match status" value="1"/>
</dbReference>
<dbReference type="Pfam" id="PF00687">
    <property type="entry name" value="Ribosomal_L1"/>
    <property type="match status" value="1"/>
</dbReference>
<dbReference type="PIRSF" id="PIRSF002155">
    <property type="entry name" value="Ribosomal_L1"/>
    <property type="match status" value="1"/>
</dbReference>
<dbReference type="SUPFAM" id="SSF56808">
    <property type="entry name" value="Ribosomal protein L1"/>
    <property type="match status" value="1"/>
</dbReference>
<dbReference type="PROSITE" id="PS01199">
    <property type="entry name" value="RIBOSOMAL_L1"/>
    <property type="match status" value="1"/>
</dbReference>
<gene>
    <name evidence="1" type="primary">rplA</name>
    <name type="ordered locus">PA4273</name>
</gene>
<protein>
    <recommendedName>
        <fullName evidence="1">Large ribosomal subunit protein uL1</fullName>
    </recommendedName>
    <alternativeName>
        <fullName evidence="2">50S ribosomal protein L1</fullName>
    </alternativeName>
</protein>
<organism>
    <name type="scientific">Pseudomonas aeruginosa (strain ATCC 15692 / DSM 22644 / CIP 104116 / JCM 14847 / LMG 12228 / 1C / PRS 101 / PAO1)</name>
    <dbReference type="NCBI Taxonomy" id="208964"/>
    <lineage>
        <taxon>Bacteria</taxon>
        <taxon>Pseudomonadati</taxon>
        <taxon>Pseudomonadota</taxon>
        <taxon>Gammaproteobacteria</taxon>
        <taxon>Pseudomonadales</taxon>
        <taxon>Pseudomonadaceae</taxon>
        <taxon>Pseudomonas</taxon>
    </lineage>
</organism>